<sequence length="552" mass="60292">MIMFCVQCEQTIRTPAGNGCSYAQGMCGKTAETSDLQDLLIAALQGLSAWAVKAREYGIINHDVDSFAPRAFFSTLTNVNFDSPRIVGYAREAIALREALKAQCLAVDANARVDNPMADLQLVSDDLGELQRQAAEFTPNKDKAAIGENILGLRLLCLYGLKGAAAYMEHAHVLGQYDNDIYAQYHKIMAWLGTWPADMNALLECSMEIGQMNFKVMSILDAGETGKYGHPTPTQVNVKATAGKCILISGHDLKDLYNLLEQTEGTGVNVYTHGEMLPAHGYPELRKFKHLVGNYGSGWQNQQVEFARFPGPIVMTSNCIIDPTVGAYDDRIWTRSIVGWPGVRHLDGEDFSAVIAQAQQMAGFPYSEIPHLITVGFGRQTLLGAADTLIDLVSREKLRHIFLLGGCDGARGERHYFTDFATSVPDDCLILTLACGKYRFNKLEFGDIEGLPRLVDAGQCNDAYSAIILAVTLAEKLGCGVNDLPLSLVLSWFEQKAIVILLTLLSLGVKNIVTGPTAPGFLTPDLLAVLNEKFGLRSITTVEEDMKQLLSA</sequence>
<accession>Q1RE52</accession>
<keyword id="KW-0001">2Fe-2S</keyword>
<keyword id="KW-0963">Cytoplasm</keyword>
<keyword id="KW-0408">Iron</keyword>
<keyword id="KW-0411">Iron-sulfur</keyword>
<keyword id="KW-0479">Metal-binding</keyword>
<keyword id="KW-0560">Oxidoreductase</keyword>
<organism>
    <name type="scientific">Escherichia coli (strain UTI89 / UPEC)</name>
    <dbReference type="NCBI Taxonomy" id="364106"/>
    <lineage>
        <taxon>Bacteria</taxon>
        <taxon>Pseudomonadati</taxon>
        <taxon>Pseudomonadota</taxon>
        <taxon>Gammaproteobacteria</taxon>
        <taxon>Enterobacterales</taxon>
        <taxon>Enterobacteriaceae</taxon>
        <taxon>Escherichia</taxon>
    </lineage>
</organism>
<evidence type="ECO:0000255" key="1">
    <source>
        <dbReference type="HAMAP-Rule" id="MF_00069"/>
    </source>
</evidence>
<reference key="1">
    <citation type="journal article" date="2006" name="Proc. Natl. Acad. Sci. U.S.A.">
        <title>Identification of genes subject to positive selection in uropathogenic strains of Escherichia coli: a comparative genomics approach.</title>
        <authorList>
            <person name="Chen S.L."/>
            <person name="Hung C.-S."/>
            <person name="Xu J."/>
            <person name="Reigstad C.S."/>
            <person name="Magrini V."/>
            <person name="Sabo A."/>
            <person name="Blasiar D."/>
            <person name="Bieri T."/>
            <person name="Meyer R.R."/>
            <person name="Ozersky P."/>
            <person name="Armstrong J.R."/>
            <person name="Fulton R.S."/>
            <person name="Latreille J.P."/>
            <person name="Spieth J."/>
            <person name="Hooton T.M."/>
            <person name="Mardis E.R."/>
            <person name="Hultgren S.J."/>
            <person name="Gordon J.I."/>
        </authorList>
    </citation>
    <scope>NUCLEOTIDE SEQUENCE [LARGE SCALE GENOMIC DNA]</scope>
    <source>
        <strain>UTI89 / UPEC</strain>
    </source>
</reference>
<protein>
    <recommendedName>
        <fullName evidence="1">Hydroxylamine reductase</fullName>
        <ecNumber evidence="1">1.7.99.1</ecNumber>
    </recommendedName>
    <alternativeName>
        <fullName evidence="1">Hybrid-cluster protein</fullName>
        <shortName evidence="1">HCP</shortName>
    </alternativeName>
    <alternativeName>
        <fullName evidence="1">Prismane protein</fullName>
    </alternativeName>
</protein>
<name>HCP_ECOUT</name>
<dbReference type="EC" id="1.7.99.1" evidence="1"/>
<dbReference type="EMBL" id="CP000243">
    <property type="protein sequence ID" value="ABE06362.1"/>
    <property type="molecule type" value="Genomic_DNA"/>
</dbReference>
<dbReference type="SMR" id="Q1RE52"/>
<dbReference type="KEGG" id="eci:UTI89_C0876"/>
<dbReference type="HOGENOM" id="CLU_038344_2_0_6"/>
<dbReference type="Proteomes" id="UP000001952">
    <property type="component" value="Chromosome"/>
</dbReference>
<dbReference type="GO" id="GO:0005737">
    <property type="term" value="C:cytoplasm"/>
    <property type="evidence" value="ECO:0007669"/>
    <property type="project" value="UniProtKB-SubCell"/>
</dbReference>
<dbReference type="GO" id="GO:0051537">
    <property type="term" value="F:2 iron, 2 sulfur cluster binding"/>
    <property type="evidence" value="ECO:0007669"/>
    <property type="project" value="UniProtKB-KW"/>
</dbReference>
<dbReference type="GO" id="GO:0050418">
    <property type="term" value="F:hydroxylamine reductase activity"/>
    <property type="evidence" value="ECO:0007669"/>
    <property type="project" value="UniProtKB-UniRule"/>
</dbReference>
<dbReference type="GO" id="GO:0046872">
    <property type="term" value="F:metal ion binding"/>
    <property type="evidence" value="ECO:0007669"/>
    <property type="project" value="UniProtKB-KW"/>
</dbReference>
<dbReference type="GO" id="GO:0004601">
    <property type="term" value="F:peroxidase activity"/>
    <property type="evidence" value="ECO:0007669"/>
    <property type="project" value="TreeGrafter"/>
</dbReference>
<dbReference type="GO" id="GO:0042542">
    <property type="term" value="P:response to hydrogen peroxide"/>
    <property type="evidence" value="ECO:0007669"/>
    <property type="project" value="TreeGrafter"/>
</dbReference>
<dbReference type="CDD" id="cd01914">
    <property type="entry name" value="HCP"/>
    <property type="match status" value="1"/>
</dbReference>
<dbReference type="FunFam" id="1.20.1270.20:FF:000001">
    <property type="entry name" value="Hydroxylamine reductase"/>
    <property type="match status" value="1"/>
</dbReference>
<dbReference type="FunFam" id="1.20.1270.20:FF:000002">
    <property type="entry name" value="Hydroxylamine reductase"/>
    <property type="match status" value="1"/>
</dbReference>
<dbReference type="FunFam" id="3.40.50.2030:FF:000001">
    <property type="entry name" value="Hydroxylamine reductase"/>
    <property type="match status" value="1"/>
</dbReference>
<dbReference type="FunFam" id="3.40.50.2030:FF:000002">
    <property type="entry name" value="Hydroxylamine reductase"/>
    <property type="match status" value="1"/>
</dbReference>
<dbReference type="Gene3D" id="1.20.1270.20">
    <property type="match status" value="2"/>
</dbReference>
<dbReference type="Gene3D" id="3.40.50.2030">
    <property type="match status" value="2"/>
</dbReference>
<dbReference type="HAMAP" id="MF_00069">
    <property type="entry name" value="Hydroxylam_reduct"/>
    <property type="match status" value="1"/>
</dbReference>
<dbReference type="InterPro" id="IPR004137">
    <property type="entry name" value="HCP/CODH"/>
</dbReference>
<dbReference type="InterPro" id="IPR010048">
    <property type="entry name" value="Hydroxylam_reduct"/>
</dbReference>
<dbReference type="InterPro" id="IPR016099">
    <property type="entry name" value="Prismane-like_a/b-sand"/>
</dbReference>
<dbReference type="InterPro" id="IPR011254">
    <property type="entry name" value="Prismane-like_sf"/>
</dbReference>
<dbReference type="InterPro" id="IPR016100">
    <property type="entry name" value="Prismane_a-bundle"/>
</dbReference>
<dbReference type="NCBIfam" id="TIGR01703">
    <property type="entry name" value="hybrid_clust"/>
    <property type="match status" value="1"/>
</dbReference>
<dbReference type="NCBIfam" id="NF003658">
    <property type="entry name" value="PRK05290.1"/>
    <property type="match status" value="1"/>
</dbReference>
<dbReference type="PANTHER" id="PTHR30109">
    <property type="entry name" value="HYDROXYLAMINE REDUCTASE"/>
    <property type="match status" value="1"/>
</dbReference>
<dbReference type="PANTHER" id="PTHR30109:SF0">
    <property type="entry name" value="HYDROXYLAMINE REDUCTASE"/>
    <property type="match status" value="1"/>
</dbReference>
<dbReference type="Pfam" id="PF03063">
    <property type="entry name" value="Prismane"/>
    <property type="match status" value="1"/>
</dbReference>
<dbReference type="PIRSF" id="PIRSF000076">
    <property type="entry name" value="HCP"/>
    <property type="match status" value="1"/>
</dbReference>
<dbReference type="SUPFAM" id="SSF56821">
    <property type="entry name" value="Prismane protein-like"/>
    <property type="match status" value="1"/>
</dbReference>
<proteinExistence type="inferred from homology"/>
<feature type="chain" id="PRO_1000071175" description="Hydroxylamine reductase">
    <location>
        <begin position="1"/>
        <end position="552"/>
    </location>
</feature>
<feature type="binding site" evidence="1">
    <location>
        <position position="5"/>
    </location>
    <ligand>
        <name>[2Fe-2S] cluster</name>
        <dbReference type="ChEBI" id="CHEBI:190135"/>
    </ligand>
</feature>
<feature type="binding site" evidence="1">
    <location>
        <position position="8"/>
    </location>
    <ligand>
        <name>[2Fe-2S] cluster</name>
        <dbReference type="ChEBI" id="CHEBI:190135"/>
    </ligand>
</feature>
<feature type="binding site" evidence="1">
    <location>
        <position position="20"/>
    </location>
    <ligand>
        <name>[2Fe-2S] cluster</name>
        <dbReference type="ChEBI" id="CHEBI:190135"/>
    </ligand>
</feature>
<feature type="binding site" evidence="1">
    <location>
        <position position="27"/>
    </location>
    <ligand>
        <name>[2Fe-2S] cluster</name>
        <dbReference type="ChEBI" id="CHEBI:190135"/>
    </ligand>
</feature>
<feature type="binding site" evidence="1">
    <location>
        <position position="251"/>
    </location>
    <ligand>
        <name>hybrid [4Fe-2O-2S] cluster</name>
        <dbReference type="ChEBI" id="CHEBI:60519"/>
    </ligand>
</feature>
<feature type="binding site" evidence="1">
    <location>
        <position position="275"/>
    </location>
    <ligand>
        <name>hybrid [4Fe-2O-2S] cluster</name>
        <dbReference type="ChEBI" id="CHEBI:60519"/>
    </ligand>
</feature>
<feature type="binding site" evidence="1">
    <location>
        <position position="319"/>
    </location>
    <ligand>
        <name>hybrid [4Fe-2O-2S] cluster</name>
        <dbReference type="ChEBI" id="CHEBI:60519"/>
    </ligand>
</feature>
<feature type="binding site" description="via persulfide group" evidence="1">
    <location>
        <position position="407"/>
    </location>
    <ligand>
        <name>hybrid [4Fe-2O-2S] cluster</name>
        <dbReference type="ChEBI" id="CHEBI:60519"/>
    </ligand>
</feature>
<feature type="binding site" evidence="1">
    <location>
        <position position="435"/>
    </location>
    <ligand>
        <name>hybrid [4Fe-2O-2S] cluster</name>
        <dbReference type="ChEBI" id="CHEBI:60519"/>
    </ligand>
</feature>
<feature type="binding site" evidence="1">
    <location>
        <position position="460"/>
    </location>
    <ligand>
        <name>hybrid [4Fe-2O-2S] cluster</name>
        <dbReference type="ChEBI" id="CHEBI:60519"/>
    </ligand>
</feature>
<feature type="binding site" evidence="1">
    <location>
        <position position="494"/>
    </location>
    <ligand>
        <name>hybrid [4Fe-2O-2S] cluster</name>
        <dbReference type="ChEBI" id="CHEBI:60519"/>
    </ligand>
</feature>
<feature type="binding site" evidence="1">
    <location>
        <position position="496"/>
    </location>
    <ligand>
        <name>hybrid [4Fe-2O-2S] cluster</name>
        <dbReference type="ChEBI" id="CHEBI:60519"/>
    </ligand>
</feature>
<feature type="modified residue" description="Cysteine persulfide" evidence="1">
    <location>
        <position position="407"/>
    </location>
</feature>
<comment type="function">
    <text evidence="1">Catalyzes the reduction of hydroxylamine to form NH(3) and H(2)O.</text>
</comment>
<comment type="catalytic activity">
    <reaction evidence="1">
        <text>A + NH4(+) + H2O = hydroxylamine + AH2 + H(+)</text>
        <dbReference type="Rhea" id="RHEA:22052"/>
        <dbReference type="ChEBI" id="CHEBI:13193"/>
        <dbReference type="ChEBI" id="CHEBI:15377"/>
        <dbReference type="ChEBI" id="CHEBI:15378"/>
        <dbReference type="ChEBI" id="CHEBI:15429"/>
        <dbReference type="ChEBI" id="CHEBI:17499"/>
        <dbReference type="ChEBI" id="CHEBI:28938"/>
        <dbReference type="EC" id="1.7.99.1"/>
    </reaction>
</comment>
<comment type="cofactor">
    <cofactor evidence="1">
        <name>[2Fe-2S] cluster</name>
        <dbReference type="ChEBI" id="CHEBI:190135"/>
    </cofactor>
    <text evidence="1">Binds 1 [2Fe-2S] cluster.</text>
</comment>
<comment type="cofactor">
    <cofactor evidence="1">
        <name>hybrid [4Fe-2O-2S] cluster</name>
        <dbReference type="ChEBI" id="CHEBI:60519"/>
    </cofactor>
    <text evidence="1">Binds 1 hybrid [4Fe-2O-2S] cluster.</text>
</comment>
<comment type="subcellular location">
    <subcellularLocation>
        <location evidence="1">Cytoplasm</location>
    </subcellularLocation>
</comment>
<comment type="similarity">
    <text evidence="1">Belongs to the HCP family.</text>
</comment>
<gene>
    <name evidence="1" type="primary">hcp</name>
    <name type="ordered locus">UTI89_C0876</name>
</gene>